<gene>
    <name evidence="1" type="primary">petG</name>
    <name type="ordered locus">A9601_11631</name>
</gene>
<organism>
    <name type="scientific">Prochlorococcus marinus (strain AS9601)</name>
    <dbReference type="NCBI Taxonomy" id="146891"/>
    <lineage>
        <taxon>Bacteria</taxon>
        <taxon>Bacillati</taxon>
        <taxon>Cyanobacteriota</taxon>
        <taxon>Cyanophyceae</taxon>
        <taxon>Synechococcales</taxon>
        <taxon>Prochlorococcaceae</taxon>
        <taxon>Prochlorococcus</taxon>
    </lineage>
</organism>
<name>PETG_PROMS</name>
<protein>
    <recommendedName>
        <fullName evidence="1">Cytochrome b6-f complex subunit 5</fullName>
    </recommendedName>
    <alternativeName>
        <fullName evidence="1">Cytochrome b6-f complex subunit PetG</fullName>
    </alternativeName>
    <alternativeName>
        <fullName evidence="1">Cytochrome b6-f complex subunit V</fullName>
    </alternativeName>
</protein>
<sequence>MIEPLLCGIVLGLVPITLLGLFVSAWNQYRRGSGMLDID</sequence>
<evidence type="ECO:0000255" key="1">
    <source>
        <dbReference type="HAMAP-Rule" id="MF_00432"/>
    </source>
</evidence>
<keyword id="KW-0249">Electron transport</keyword>
<keyword id="KW-0472">Membrane</keyword>
<keyword id="KW-0602">Photosynthesis</keyword>
<keyword id="KW-0793">Thylakoid</keyword>
<keyword id="KW-0812">Transmembrane</keyword>
<keyword id="KW-1133">Transmembrane helix</keyword>
<keyword id="KW-0813">Transport</keyword>
<reference key="1">
    <citation type="journal article" date="2007" name="PLoS Genet.">
        <title>Patterns and implications of gene gain and loss in the evolution of Prochlorococcus.</title>
        <authorList>
            <person name="Kettler G.C."/>
            <person name="Martiny A.C."/>
            <person name="Huang K."/>
            <person name="Zucker J."/>
            <person name="Coleman M.L."/>
            <person name="Rodrigue S."/>
            <person name="Chen F."/>
            <person name="Lapidus A."/>
            <person name="Ferriera S."/>
            <person name="Johnson J."/>
            <person name="Steglich C."/>
            <person name="Church G.M."/>
            <person name="Richardson P."/>
            <person name="Chisholm S.W."/>
        </authorList>
    </citation>
    <scope>NUCLEOTIDE SEQUENCE [LARGE SCALE GENOMIC DNA]</scope>
    <source>
        <strain>AS9601</strain>
    </source>
</reference>
<proteinExistence type="inferred from homology"/>
<feature type="chain" id="PRO_1000050394" description="Cytochrome b6-f complex subunit 5">
    <location>
        <begin position="1"/>
        <end position="39"/>
    </location>
</feature>
<feature type="transmembrane region" description="Helical" evidence="1">
    <location>
        <begin position="5"/>
        <end position="25"/>
    </location>
</feature>
<accession>A2BRN6</accession>
<comment type="function">
    <text evidence="1">Component of the cytochrome b6-f complex, which mediates electron transfer between photosystem II (PSII) and photosystem I (PSI), cyclic electron flow around PSI, and state transitions. PetG is required for either the stability or assembly of the cytochrome b6-f complex.</text>
</comment>
<comment type="subunit">
    <text evidence="1">The 4 large subunits of the cytochrome b6-f complex are cytochrome b6, subunit IV (17 kDa polypeptide, PetD), cytochrome f and the Rieske protein, while the 4 small subunits are PetG, PetL, PetM and PetN. The complex functions as a dimer.</text>
</comment>
<comment type="subcellular location">
    <subcellularLocation>
        <location evidence="1">Cellular thylakoid membrane</location>
        <topology evidence="1">Single-pass membrane protein</topology>
    </subcellularLocation>
</comment>
<comment type="similarity">
    <text evidence="1">Belongs to the PetG family.</text>
</comment>
<dbReference type="EMBL" id="CP000551">
    <property type="protein sequence ID" value="ABM70447.1"/>
    <property type="molecule type" value="Genomic_DNA"/>
</dbReference>
<dbReference type="RefSeq" id="WP_011376619.1">
    <property type="nucleotide sequence ID" value="NC_008816.1"/>
</dbReference>
<dbReference type="SMR" id="A2BRN6"/>
<dbReference type="STRING" id="146891.A9601_11631"/>
<dbReference type="KEGG" id="pmb:A9601_11631"/>
<dbReference type="HOGENOM" id="CLU_216962_0_0_3"/>
<dbReference type="OrthoDB" id="428448at2"/>
<dbReference type="Proteomes" id="UP000002590">
    <property type="component" value="Chromosome"/>
</dbReference>
<dbReference type="GO" id="GO:0009512">
    <property type="term" value="C:cytochrome b6f complex"/>
    <property type="evidence" value="ECO:0007669"/>
    <property type="project" value="InterPro"/>
</dbReference>
<dbReference type="GO" id="GO:0031676">
    <property type="term" value="C:plasma membrane-derived thylakoid membrane"/>
    <property type="evidence" value="ECO:0007669"/>
    <property type="project" value="UniProtKB-SubCell"/>
</dbReference>
<dbReference type="GO" id="GO:0045158">
    <property type="term" value="F:electron transporter, transferring electrons within cytochrome b6/f complex of photosystem II activity"/>
    <property type="evidence" value="ECO:0007669"/>
    <property type="project" value="UniProtKB-UniRule"/>
</dbReference>
<dbReference type="GO" id="GO:0017004">
    <property type="term" value="P:cytochrome complex assembly"/>
    <property type="evidence" value="ECO:0007669"/>
    <property type="project" value="UniProtKB-UniRule"/>
</dbReference>
<dbReference type="GO" id="GO:0015979">
    <property type="term" value="P:photosynthesis"/>
    <property type="evidence" value="ECO:0007669"/>
    <property type="project" value="UniProtKB-KW"/>
</dbReference>
<dbReference type="HAMAP" id="MF_00432">
    <property type="entry name" value="Cytb6_f_PetG"/>
    <property type="match status" value="1"/>
</dbReference>
<dbReference type="InterPro" id="IPR003683">
    <property type="entry name" value="Cyt_6/f_cplx_su5"/>
</dbReference>
<dbReference type="InterPro" id="IPR036099">
    <property type="entry name" value="Cyt_6/f_cplx_su5_sf"/>
</dbReference>
<dbReference type="NCBIfam" id="NF001907">
    <property type="entry name" value="PRK00665.1"/>
    <property type="match status" value="1"/>
</dbReference>
<dbReference type="Pfam" id="PF02529">
    <property type="entry name" value="PetG"/>
    <property type="match status" value="1"/>
</dbReference>
<dbReference type="PIRSF" id="PIRSF000034">
    <property type="entry name" value="Cyt_b6-f_V"/>
    <property type="match status" value="1"/>
</dbReference>
<dbReference type="SUPFAM" id="SSF103446">
    <property type="entry name" value="PetG subunit of the cytochrome b6f complex"/>
    <property type="match status" value="1"/>
</dbReference>